<sequence length="951" mass="104062">MHKRKGPPGPPGRGAAAARQLGLLVDLSPDGLMIPEDGANDEELEAEFLALVGGQPPALEKLKGKGPLPMEAIEKMASLCMRDPDEDEEEGTDEDDLEADDDLLAELNEVLGEEQKASETPPPVAQPKPEAPHPGLETTLQERLALYQTAIESARQAGDSAKMRRYDRGLKTLENLLASIRKGNAIDEADIPPPVAIGKGPASTPTYSPAPTQPAPRIASAPEPRVTLEGPSATAPASSPGLAKPQMPPGPCSPGPLAQLQSRQRDYKLAALHAKQQGDTTAAARHFRVAKSFDAVLEALSRGEPVDLSCLPPPPDQLPPDPPSPPSQPPTPATAPSTTEVPPPPRTLLEALEQRMERYQVAAAQAKSKGDQRKARMHERIVKQYQDAIRAHKAGRAVDVAELPVPPGFPPIQGLEATKPTQQSLVGVLETAMKLANQDEGPEDEEDEVPKKQNSPVAPTAQPKAPPSRTPQSGSAPTAKAPPKATSTRAQQQLAFLEGRKKQLLQAALRAKQKNDVEGAKMHLRQAKGLEPMLEASRNGLPVDITKVPPAPVNKDDFALVQRPGPGLSQEAARRYGELTKLIRQQHEMCLNHSNQFTQLGNITETTKFEKLAEDCKRSMDILKQAFVRGLPTPTARFEQRTFSVIKIFPDLSSNDMLLFIVKGINLPTPPGLSPGDLDVFVRFDFPYPNVEEAQKDKTSVIKNTDSPEFKEQFKLCINRSHRGFRRAIQTKGIKFEVVHKGGLFKTDRVLGTAQLKLDALEIACEVREILEVLDGRRPTGGRLEVMVRIREPLTAQQLETTTERWLVIDPVPAAVPTQVAGPKGKAPPVPAPARESGNRSARPLHSLSVLAFDQERLERKILALRQARRPVPPEVAQQYQDIMQRSQWQRAQLEQGGVGIRREYAAQLERQLQFYTEAARRLGNDGSRDAAKEALYRRNLVESELQRLRR</sequence>
<evidence type="ECO:0000250" key="1"/>
<evidence type="ECO:0000250" key="2">
    <source>
        <dbReference type="UniProtKB" id="Q66HA5"/>
    </source>
</evidence>
<evidence type="ECO:0000255" key="3"/>
<evidence type="ECO:0000255" key="4">
    <source>
        <dbReference type="PROSITE-ProRule" id="PRU00041"/>
    </source>
</evidence>
<evidence type="ECO:0000256" key="5">
    <source>
        <dbReference type="SAM" id="MobiDB-lite"/>
    </source>
</evidence>
<evidence type="ECO:0000269" key="6">
    <source>
    </source>
</evidence>
<evidence type="ECO:0000269" key="7">
    <source>
    </source>
</evidence>
<evidence type="ECO:0000303" key="8">
    <source>
    </source>
</evidence>
<evidence type="ECO:0000303" key="9">
    <source ref="1"/>
</evidence>
<evidence type="ECO:0000305" key="10"/>
<evidence type="ECO:0007744" key="11">
    <source>
    </source>
</evidence>
<evidence type="ECO:0007744" key="12">
    <source>
    </source>
</evidence>
<evidence type="ECO:0007744" key="13">
    <source>
    </source>
</evidence>
<evidence type="ECO:0007744" key="14">
    <source>
    </source>
</evidence>
<evidence type="ECO:0007744" key="15">
    <source>
    </source>
</evidence>
<evidence type="ECO:0007744" key="16">
    <source>
    </source>
</evidence>
<comment type="function">
    <text evidence="1 7">Transcription factor that binds specifically to the DRE (dual repressor element) and represses HTR1A gene transcription in neuronal cells. The combination of calcium and ATP specifically inactivates the binding with FRE. May play a role in the altered regulation of HTR1A associated with anxiety and major depression. Mediates HDAC-independent repression of HTR1A promoter in neuronal cell. Performs essential function in controlling functional maturation of synapses (By similarity). Plays distinct roles depending on its localization. When cytoplasmic, acts as a scaffold protein in the PI3K/PDK1/AKT pathway. Repressor of HTR1A when nuclear. In the centrosome, regulates spindle pole localization of the cohesin subunit SCC1/RAD21, thereby mediating centriole cohesion during mitosis.</text>
</comment>
<comment type="interaction">
    <interactant intactId="EBI-7112364">
        <id>Q6P1N0</id>
    </interactant>
    <interactant intactId="EBI-749627">
        <id>Q9H444</id>
        <label>CHMP4B</label>
    </interactant>
    <organismsDiffer>false</organismsDiffer>
    <experiments>4</experiments>
</comment>
<comment type="subcellular location">
    <subcellularLocation>
        <location evidence="6">Cytoplasm</location>
    </subcellularLocation>
    <subcellularLocation>
        <location evidence="2">Nucleus</location>
    </subcellularLocation>
    <subcellularLocation>
        <location evidence="8">Cytoplasm</location>
        <location evidence="8">Cytoskeleton</location>
        <location evidence="8">Microtubule organizing center</location>
        <location evidence="8">Centrosome</location>
    </subcellularLocation>
</comment>
<comment type="alternative products">
    <event type="alternative splicing"/>
    <isoform>
        <id>Q6P1N0-1</id>
        <name>1</name>
        <sequence type="displayed"/>
    </isoform>
    <isoform>
        <id>Q6P1N0-2</id>
        <name>2</name>
        <sequence type="described" ref="VSP_019242"/>
    </isoform>
</comment>
<comment type="domain">
    <text evidence="1">The C2 domain is required for the repression.</text>
</comment>
<comment type="PTM">
    <text evidence="7">Phosphorylation on Ser-208 by CDK1 promotes spindle pole localization and association with SCC1/RAD21.</text>
</comment>
<comment type="disease" evidence="6">
    <disease id="DI-00716">
        <name>Intellectual developmental disorder, autosomal recessive 3</name>
        <acronym>MRT3</acronym>
        <description>A disorder characterized by significantly below average general intellectual functioning associated with impairments in adaptive behavior and manifested during the developmental period.</description>
        <dbReference type="MIM" id="608443"/>
    </disease>
    <text>The disease is caused by variants affecting the gene represented in this entry.</text>
</comment>
<comment type="similarity">
    <text evidence="10">Belongs to the CC2D1 family.</text>
</comment>
<comment type="sequence caution" evidence="10">
    <conflict type="miscellaneous discrepancy">
        <sequence resource="EMBL-CDS" id="BAA91029"/>
    </conflict>
    <text>Aberrant splicing.</text>
</comment>
<comment type="sequence caution" evidence="10">
    <conflict type="erroneous initiation">
        <sequence resource="EMBL-CDS" id="BAB15464"/>
    </conflict>
    <text>Truncated N-terminus.</text>
</comment>
<proteinExistence type="evidence at protein level"/>
<protein>
    <recommendedName>
        <fullName>Coiled-coil and C2 domain-containing protein 1A</fullName>
    </recommendedName>
    <alternativeName>
        <fullName>Akt kinase-interacting protein 1</fullName>
    </alternativeName>
    <alternativeName>
        <fullName>Five prime repressor element under dual repression-binding protein 1</fullName>
        <shortName>FRE under dual repression-binding protein 1</shortName>
        <shortName>Freud-1</shortName>
    </alternativeName>
    <alternativeName>
        <fullName>Putative NF-kappa-B-activating protein 023N</fullName>
    </alternativeName>
</protein>
<name>C2D1A_HUMAN</name>
<reference key="1">
    <citation type="submission" date="2002-08" db="EMBL/GenBank/DDBJ databases">
        <authorList>
            <person name="Guo J.H."/>
            <person name="Chen L."/>
            <person name="Yu L."/>
        </authorList>
    </citation>
    <scope>NUCLEOTIDE SEQUENCE [LARGE SCALE MRNA] (ISOFORM 2)</scope>
    <source>
        <tissue>Kidney</tissue>
    </source>
</reference>
<reference key="2">
    <citation type="journal article" date="2003" name="Oncogene">
        <title>Large-scale identification and characterization of human genes that activate NF-kappaB and MAPK signaling pathways.</title>
        <authorList>
            <person name="Matsuda A."/>
            <person name="Suzuki Y."/>
            <person name="Honda G."/>
            <person name="Muramatsu S."/>
            <person name="Matsuzaki O."/>
            <person name="Nagano Y."/>
            <person name="Doi T."/>
            <person name="Shimotohno K."/>
            <person name="Harada T."/>
            <person name="Nishida E."/>
            <person name="Hayashi H."/>
            <person name="Sugano S."/>
        </authorList>
    </citation>
    <scope>NUCLEOTIDE SEQUENCE [LARGE SCALE MRNA] (ISOFORM 1)</scope>
    <source>
        <tissue>Lung fibroblast</tissue>
    </source>
</reference>
<reference key="3">
    <citation type="journal article" date="2004" name="Nat. Genet.">
        <title>Complete sequencing and characterization of 21,243 full-length human cDNAs.</title>
        <authorList>
            <person name="Ota T."/>
            <person name="Suzuki Y."/>
            <person name="Nishikawa T."/>
            <person name="Otsuki T."/>
            <person name="Sugiyama T."/>
            <person name="Irie R."/>
            <person name="Wakamatsu A."/>
            <person name="Hayashi K."/>
            <person name="Sato H."/>
            <person name="Nagai K."/>
            <person name="Kimura K."/>
            <person name="Makita H."/>
            <person name="Sekine M."/>
            <person name="Obayashi M."/>
            <person name="Nishi T."/>
            <person name="Shibahara T."/>
            <person name="Tanaka T."/>
            <person name="Ishii S."/>
            <person name="Yamamoto J."/>
            <person name="Saito K."/>
            <person name="Kawai Y."/>
            <person name="Isono Y."/>
            <person name="Nakamura Y."/>
            <person name="Nagahari K."/>
            <person name="Murakami K."/>
            <person name="Yasuda T."/>
            <person name="Iwayanagi T."/>
            <person name="Wagatsuma M."/>
            <person name="Shiratori A."/>
            <person name="Sudo H."/>
            <person name="Hosoiri T."/>
            <person name="Kaku Y."/>
            <person name="Kodaira H."/>
            <person name="Kondo H."/>
            <person name="Sugawara M."/>
            <person name="Takahashi M."/>
            <person name="Kanda K."/>
            <person name="Yokoi T."/>
            <person name="Furuya T."/>
            <person name="Kikkawa E."/>
            <person name="Omura Y."/>
            <person name="Abe K."/>
            <person name="Kamihara K."/>
            <person name="Katsuta N."/>
            <person name="Sato K."/>
            <person name="Tanikawa M."/>
            <person name="Yamazaki M."/>
            <person name="Ninomiya K."/>
            <person name="Ishibashi T."/>
            <person name="Yamashita H."/>
            <person name="Murakawa K."/>
            <person name="Fujimori K."/>
            <person name="Tanai H."/>
            <person name="Kimata M."/>
            <person name="Watanabe M."/>
            <person name="Hiraoka S."/>
            <person name="Chiba Y."/>
            <person name="Ishida S."/>
            <person name="Ono Y."/>
            <person name="Takiguchi S."/>
            <person name="Watanabe S."/>
            <person name="Yosida M."/>
            <person name="Hotuta T."/>
            <person name="Kusano J."/>
            <person name="Kanehori K."/>
            <person name="Takahashi-Fujii A."/>
            <person name="Hara H."/>
            <person name="Tanase T.-O."/>
            <person name="Nomura Y."/>
            <person name="Togiya S."/>
            <person name="Komai F."/>
            <person name="Hara R."/>
            <person name="Takeuchi K."/>
            <person name="Arita M."/>
            <person name="Imose N."/>
            <person name="Musashino K."/>
            <person name="Yuuki H."/>
            <person name="Oshima A."/>
            <person name="Sasaki N."/>
            <person name="Aotsuka S."/>
            <person name="Yoshikawa Y."/>
            <person name="Matsunawa H."/>
            <person name="Ichihara T."/>
            <person name="Shiohata N."/>
            <person name="Sano S."/>
            <person name="Moriya S."/>
            <person name="Momiyama H."/>
            <person name="Satoh N."/>
            <person name="Takami S."/>
            <person name="Terashima Y."/>
            <person name="Suzuki O."/>
            <person name="Nakagawa S."/>
            <person name="Senoh A."/>
            <person name="Mizoguchi H."/>
            <person name="Goto Y."/>
            <person name="Shimizu F."/>
            <person name="Wakebe H."/>
            <person name="Hishigaki H."/>
            <person name="Watanabe T."/>
            <person name="Sugiyama A."/>
            <person name="Takemoto M."/>
            <person name="Kawakami B."/>
            <person name="Yamazaki M."/>
            <person name="Watanabe K."/>
            <person name="Kumagai A."/>
            <person name="Itakura S."/>
            <person name="Fukuzumi Y."/>
            <person name="Fujimori Y."/>
            <person name="Komiyama M."/>
            <person name="Tashiro H."/>
            <person name="Tanigami A."/>
            <person name="Fujiwara T."/>
            <person name="Ono T."/>
            <person name="Yamada K."/>
            <person name="Fujii Y."/>
            <person name="Ozaki K."/>
            <person name="Hirao M."/>
            <person name="Ohmori Y."/>
            <person name="Kawabata A."/>
            <person name="Hikiji T."/>
            <person name="Kobatake N."/>
            <person name="Inagaki H."/>
            <person name="Ikema Y."/>
            <person name="Okamoto S."/>
            <person name="Okitani R."/>
            <person name="Kawakami T."/>
            <person name="Noguchi S."/>
            <person name="Itoh T."/>
            <person name="Shigeta K."/>
            <person name="Senba T."/>
            <person name="Matsumura K."/>
            <person name="Nakajima Y."/>
            <person name="Mizuno T."/>
            <person name="Morinaga M."/>
            <person name="Sasaki M."/>
            <person name="Togashi T."/>
            <person name="Oyama M."/>
            <person name="Hata H."/>
            <person name="Watanabe M."/>
            <person name="Komatsu T."/>
            <person name="Mizushima-Sugano J."/>
            <person name="Satoh T."/>
            <person name="Shirai Y."/>
            <person name="Takahashi Y."/>
            <person name="Nakagawa K."/>
            <person name="Okumura K."/>
            <person name="Nagase T."/>
            <person name="Nomura N."/>
            <person name="Kikuchi H."/>
            <person name="Masuho Y."/>
            <person name="Yamashita R."/>
            <person name="Nakai K."/>
            <person name="Yada T."/>
            <person name="Nakamura Y."/>
            <person name="Ohara O."/>
            <person name="Isogai T."/>
            <person name="Sugano S."/>
        </authorList>
    </citation>
    <scope>NUCLEOTIDE SEQUENCE [LARGE SCALE MRNA] OF 254-606 AND 622-951 (ISOFORM 1)</scope>
    <source>
        <tissue>Ovary</tissue>
    </source>
</reference>
<reference key="4">
    <citation type="journal article" date="2004" name="Genome Res.">
        <title>The status, quality, and expansion of the NIH full-length cDNA project: the Mammalian Gene Collection (MGC).</title>
        <authorList>
            <consortium name="The MGC Project Team"/>
        </authorList>
    </citation>
    <scope>NUCLEOTIDE SEQUENCE [LARGE SCALE MRNA] (ISOFORM 1)</scope>
    <source>
        <tissue>Brain</tissue>
        <tissue>Ovary</tissue>
    </source>
</reference>
<reference key="5">
    <citation type="journal article" date="2005" name="Nat. Biotechnol.">
        <title>Immunoaffinity profiling of tyrosine phosphorylation in cancer cells.</title>
        <authorList>
            <person name="Rush J."/>
            <person name="Moritz A."/>
            <person name="Lee K.A."/>
            <person name="Guo A."/>
            <person name="Goss V.L."/>
            <person name="Spek E.J."/>
            <person name="Zhang H."/>
            <person name="Zha X.-M."/>
            <person name="Polakiewicz R.D."/>
            <person name="Comb M.J."/>
        </authorList>
    </citation>
    <scope>IDENTIFICATION BY MASS SPECTROMETRY [LARGE SCALE ANALYSIS]</scope>
</reference>
<reference key="6">
    <citation type="journal article" date="2006" name="J. Med. Genet.">
        <title>The CC2D1A, a member of a new gene family with C2 domains, is involved in autosomal recessive non-syndromic mental retardation.</title>
        <authorList>
            <person name="Basel-Vanagaite L."/>
            <person name="Attia R."/>
            <person name="Yahav M."/>
            <person name="Ferland R.J."/>
            <person name="Anteki L."/>
            <person name="Walsh C.A."/>
            <person name="Olender T."/>
            <person name="Straussberg R."/>
            <person name="Magal N."/>
            <person name="Taub E."/>
            <person name="Drasinover V."/>
            <person name="Alkelai A."/>
            <person name="Bercovich D."/>
            <person name="Rechavi G."/>
            <person name="Simon A.J."/>
            <person name="Shohat M."/>
        </authorList>
    </citation>
    <scope>SUBCELLULAR LOCATION</scope>
    <scope>INVOLVEMENT IN MRT3</scope>
</reference>
<reference key="7">
    <citation type="journal article" date="2006" name="Nat. Biotechnol.">
        <title>A probability-based approach for high-throughput protein phosphorylation analysis and site localization.</title>
        <authorList>
            <person name="Beausoleil S.A."/>
            <person name="Villen J."/>
            <person name="Gerber S.A."/>
            <person name="Rush J."/>
            <person name="Gygi S.P."/>
        </authorList>
    </citation>
    <scope>PHOSPHORYLATION [LARGE SCALE ANALYSIS] AT SER-208</scope>
    <scope>IDENTIFICATION BY MASS SPECTROMETRY [LARGE SCALE ANALYSIS]</scope>
    <source>
        <tissue>Cervix carcinoma</tissue>
    </source>
</reference>
<reference key="8">
    <citation type="journal article" date="2008" name="J. Proteome Res.">
        <title>Combining protein-based IMAC, peptide-based IMAC, and MudPIT for efficient phosphoproteomic analysis.</title>
        <authorList>
            <person name="Cantin G.T."/>
            <person name="Yi W."/>
            <person name="Lu B."/>
            <person name="Park S.K."/>
            <person name="Xu T."/>
            <person name="Lee J.-D."/>
            <person name="Yates J.R. III"/>
        </authorList>
    </citation>
    <scope>IDENTIFICATION BY MASS SPECTROMETRY [LARGE SCALE ANALYSIS]</scope>
    <source>
        <tissue>Cervix carcinoma</tissue>
    </source>
</reference>
<reference key="9">
    <citation type="journal article" date="2008" name="Proc. Natl. Acad. Sci. U.S.A.">
        <title>A quantitative atlas of mitotic phosphorylation.</title>
        <authorList>
            <person name="Dephoure N."/>
            <person name="Zhou C."/>
            <person name="Villen J."/>
            <person name="Beausoleil S.A."/>
            <person name="Bakalarski C.E."/>
            <person name="Elledge S.J."/>
            <person name="Gygi S.P."/>
        </authorList>
    </citation>
    <scope>PHOSPHORYLATION [LARGE SCALE ANALYSIS] AT THR-204; SER-208; SER-253 AND SER-455</scope>
    <scope>IDENTIFICATION BY MASS SPECTROMETRY [LARGE SCALE ANALYSIS]</scope>
    <source>
        <tissue>Cervix carcinoma</tissue>
    </source>
</reference>
<reference key="10">
    <citation type="journal article" date="2010" name="Biochem. Biophys. Res. Commun.">
        <title>Mitotic phosphorylation of Aki1 at Ser208 by cyclin B1-Cdk1 complex.</title>
        <authorList>
            <person name="Nakamura A."/>
            <person name="Naito M."/>
            <person name="Arai H."/>
            <person name="Fujita N."/>
        </authorList>
    </citation>
    <scope>FUNCTION</scope>
    <scope>PHOSPHORYLATION AT SER-208 BY CDK1</scope>
    <scope>SUBCELLULAR LOCATION</scope>
</reference>
<reference key="11">
    <citation type="journal article" date="2010" name="Sci. Signal.">
        <title>Quantitative phosphoproteomics reveals widespread full phosphorylation site occupancy during mitosis.</title>
        <authorList>
            <person name="Olsen J.V."/>
            <person name="Vermeulen M."/>
            <person name="Santamaria A."/>
            <person name="Kumar C."/>
            <person name="Miller M.L."/>
            <person name="Jensen L.J."/>
            <person name="Gnad F."/>
            <person name="Cox J."/>
            <person name="Jensen T.S."/>
            <person name="Nigg E.A."/>
            <person name="Brunak S."/>
            <person name="Mann M."/>
        </authorList>
    </citation>
    <scope>PHOSPHORYLATION [LARGE SCALE ANALYSIS] AT SER-208 AND SER-455</scope>
    <scope>IDENTIFICATION BY MASS SPECTROMETRY [LARGE SCALE ANALYSIS]</scope>
    <source>
        <tissue>Cervix carcinoma</tissue>
    </source>
</reference>
<reference key="12">
    <citation type="journal article" date="2011" name="BMC Syst. Biol.">
        <title>Initial characterization of the human central proteome.</title>
        <authorList>
            <person name="Burkard T.R."/>
            <person name="Planyavsky M."/>
            <person name="Kaupe I."/>
            <person name="Breitwieser F.P."/>
            <person name="Buerckstuemmer T."/>
            <person name="Bennett K.L."/>
            <person name="Superti-Furga G."/>
            <person name="Colinge J."/>
        </authorList>
    </citation>
    <scope>IDENTIFICATION BY MASS SPECTROMETRY [LARGE SCALE ANALYSIS]</scope>
</reference>
<reference key="13">
    <citation type="journal article" date="2011" name="Sci. Signal.">
        <title>System-wide temporal characterization of the proteome and phosphoproteome of human embryonic stem cell differentiation.</title>
        <authorList>
            <person name="Rigbolt K.T."/>
            <person name="Prokhorova T.A."/>
            <person name="Akimov V."/>
            <person name="Henningsen J."/>
            <person name="Johansen P.T."/>
            <person name="Kratchmarova I."/>
            <person name="Kassem M."/>
            <person name="Mann M."/>
            <person name="Olsen J.V."/>
            <person name="Blagoev B."/>
        </authorList>
    </citation>
    <scope>PHOSPHORYLATION [LARGE SCALE ANALYSIS] AT SER-455</scope>
    <scope>IDENTIFICATION BY MASS SPECTROMETRY [LARGE SCALE ANALYSIS]</scope>
</reference>
<reference key="14">
    <citation type="journal article" date="2013" name="J. Proteome Res.">
        <title>Toward a comprehensive characterization of a human cancer cell phosphoproteome.</title>
        <authorList>
            <person name="Zhou H."/>
            <person name="Di Palma S."/>
            <person name="Preisinger C."/>
            <person name="Peng M."/>
            <person name="Polat A.N."/>
            <person name="Heck A.J."/>
            <person name="Mohammed S."/>
        </authorList>
    </citation>
    <scope>PHOSPHORYLATION [LARGE SCALE ANALYSIS] AT THR-206; SER-208 AND SER-455</scope>
    <scope>IDENTIFICATION BY MASS SPECTROMETRY [LARGE SCALE ANALYSIS]</scope>
    <source>
        <tissue>Cervix carcinoma</tissue>
        <tissue>Erythroleukemia</tissue>
    </source>
</reference>
<reference key="15">
    <citation type="journal article" date="2014" name="J. Proteomics">
        <title>An enzyme assisted RP-RPLC approach for in-depth analysis of human liver phosphoproteome.</title>
        <authorList>
            <person name="Bian Y."/>
            <person name="Song C."/>
            <person name="Cheng K."/>
            <person name="Dong M."/>
            <person name="Wang F."/>
            <person name="Huang J."/>
            <person name="Sun D."/>
            <person name="Wang L."/>
            <person name="Ye M."/>
            <person name="Zou H."/>
        </authorList>
    </citation>
    <scope>PHOSPHORYLATION [LARGE SCALE ANALYSIS] AT SER-324 AND SER-455</scope>
    <scope>IDENTIFICATION BY MASS SPECTROMETRY [LARGE SCALE ANALYSIS]</scope>
    <source>
        <tissue>Liver</tissue>
    </source>
</reference>
<gene>
    <name type="primary">CC2D1A</name>
    <name type="synonym">AKI1</name>
    <name evidence="10" type="synonym">LGD2</name>
</gene>
<keyword id="KW-0025">Alternative splicing</keyword>
<keyword id="KW-0175">Coiled coil</keyword>
<keyword id="KW-0963">Cytoplasm</keyword>
<keyword id="KW-0206">Cytoskeleton</keyword>
<keyword id="KW-0238">DNA-binding</keyword>
<keyword id="KW-0991">Intellectual disability</keyword>
<keyword id="KW-0539">Nucleus</keyword>
<keyword id="KW-0597">Phosphoprotein</keyword>
<keyword id="KW-1267">Proteomics identification</keyword>
<keyword id="KW-1185">Reference proteome</keyword>
<keyword id="KW-0678">Repressor</keyword>
<keyword id="KW-0804">Transcription</keyword>
<keyword id="KW-0805">Transcription regulation</keyword>
<accession>Q6P1N0</accession>
<accession>Q7Z435</accession>
<accession>Q86XV0</accession>
<accession>Q8NF89</accession>
<accession>Q9H603</accession>
<accession>Q9NXI1</accession>
<feature type="chain" id="PRO_0000239609" description="Coiled-coil and C2 domain-containing protein 1A">
    <location>
        <begin position="1"/>
        <end position="951"/>
    </location>
</feature>
<feature type="domain" description="C2" evidence="4">
    <location>
        <begin position="637"/>
        <end position="771"/>
    </location>
</feature>
<feature type="region of interest" description="Disordered" evidence="5">
    <location>
        <begin position="80"/>
        <end position="139"/>
    </location>
</feature>
<feature type="region of interest" description="Disordered" evidence="5">
    <location>
        <begin position="185"/>
        <end position="266"/>
    </location>
</feature>
<feature type="region of interest" description="Disordered" evidence="5">
    <location>
        <begin position="306"/>
        <end position="346"/>
    </location>
</feature>
<feature type="region of interest" description="Disordered" evidence="5">
    <location>
        <begin position="437"/>
        <end position="491"/>
    </location>
</feature>
<feature type="region of interest" description="Disordered" evidence="5">
    <location>
        <begin position="818"/>
        <end position="841"/>
    </location>
</feature>
<feature type="coiled-coil region" evidence="3">
    <location>
        <begin position="346"/>
        <end position="392"/>
    </location>
</feature>
<feature type="coiled-coil region" evidence="3">
    <location>
        <begin position="484"/>
        <end position="517"/>
    </location>
</feature>
<feature type="compositionally biased region" description="Acidic residues" evidence="5">
    <location>
        <begin position="84"/>
        <end position="104"/>
    </location>
</feature>
<feature type="compositionally biased region" description="Low complexity" evidence="5">
    <location>
        <begin position="201"/>
        <end position="210"/>
    </location>
</feature>
<feature type="compositionally biased region" description="Pro residues" evidence="5">
    <location>
        <begin position="311"/>
        <end position="333"/>
    </location>
</feature>
<feature type="compositionally biased region" description="Low complexity" evidence="5">
    <location>
        <begin position="475"/>
        <end position="488"/>
    </location>
</feature>
<feature type="modified residue" description="Phosphothreonine" evidence="2">
    <location>
        <position position="92"/>
    </location>
</feature>
<feature type="modified residue" description="Phosphothreonine" evidence="12">
    <location>
        <position position="204"/>
    </location>
</feature>
<feature type="modified residue" description="Phosphothreonine" evidence="15">
    <location>
        <position position="206"/>
    </location>
</feature>
<feature type="modified residue" description="Phosphoserine; by CDK1" evidence="7 11 12 13 15">
    <location>
        <position position="208"/>
    </location>
</feature>
<feature type="modified residue" description="Phosphoserine" evidence="12">
    <location>
        <position position="253"/>
    </location>
</feature>
<feature type="modified residue" description="Phosphoserine" evidence="16">
    <location>
        <position position="324"/>
    </location>
</feature>
<feature type="modified residue" description="Phosphoserine" evidence="12 13 14 15 16">
    <location>
        <position position="455"/>
    </location>
</feature>
<feature type="splice variant" id="VSP_019242" description="In isoform 2." evidence="9">
    <location>
        <position position="819"/>
    </location>
</feature>
<feature type="sequence variant" id="VAR_026670" description="In dbSNP:rs11883041.">
    <original>T</original>
    <variation>P</variation>
    <location>
        <position position="339"/>
    </location>
</feature>
<feature type="sequence variant" id="VAR_026671" description="In dbSNP:rs2290663.">
    <original>T</original>
    <variation>S</variation>
    <location>
        <position position="635"/>
    </location>
</feature>
<feature type="sequence variant" id="VAR_026672" description="In dbSNP:rs2305777.">
    <original>T</original>
    <variation>M</variation>
    <location>
        <position position="801"/>
    </location>
</feature>
<feature type="sequence conflict" description="In Ref. 1; AAN04488." evidence="10" ref="1">
    <original>I</original>
    <variation>V</variation>
    <location>
        <position position="646"/>
    </location>
</feature>
<feature type="sequence conflict" description="In Ref. 2; BAC77355." evidence="10" ref="2">
    <original>K</original>
    <variation>E</variation>
    <location>
        <position position="824"/>
    </location>
</feature>
<feature type="sequence conflict" description="In Ref. 2; BAC77355." evidence="10" ref="2">
    <original>S</original>
    <variation>P</variation>
    <location>
        <position position="837"/>
    </location>
</feature>
<feature type="sequence conflict" description="In Ref. 2; BAC77355." evidence="10" ref="2">
    <original>A</original>
    <variation>T</variation>
    <location>
        <position position="906"/>
    </location>
</feature>
<feature type="sequence conflict" description="In Ref. 2; BAC77355." evidence="10" ref="2">
    <original>E</original>
    <variation>G</variation>
    <location>
        <position position="943"/>
    </location>
</feature>
<organism>
    <name type="scientific">Homo sapiens</name>
    <name type="common">Human</name>
    <dbReference type="NCBI Taxonomy" id="9606"/>
    <lineage>
        <taxon>Eukaryota</taxon>
        <taxon>Metazoa</taxon>
        <taxon>Chordata</taxon>
        <taxon>Craniata</taxon>
        <taxon>Vertebrata</taxon>
        <taxon>Euteleostomi</taxon>
        <taxon>Mammalia</taxon>
        <taxon>Eutheria</taxon>
        <taxon>Euarchontoglires</taxon>
        <taxon>Primates</taxon>
        <taxon>Haplorrhini</taxon>
        <taxon>Catarrhini</taxon>
        <taxon>Hominidae</taxon>
        <taxon>Homo</taxon>
    </lineage>
</organism>
<dbReference type="EMBL" id="AF536205">
    <property type="protein sequence ID" value="AAN04488.1"/>
    <property type="molecule type" value="mRNA"/>
</dbReference>
<dbReference type="EMBL" id="AB097002">
    <property type="protein sequence ID" value="BAC77355.1"/>
    <property type="molecule type" value="mRNA"/>
</dbReference>
<dbReference type="EMBL" id="AK000248">
    <property type="protein sequence ID" value="BAA91029.1"/>
    <property type="status" value="ALT_SEQ"/>
    <property type="molecule type" value="mRNA"/>
</dbReference>
<dbReference type="EMBL" id="AK026371">
    <property type="protein sequence ID" value="BAB15464.1"/>
    <property type="status" value="ALT_INIT"/>
    <property type="molecule type" value="mRNA"/>
</dbReference>
<dbReference type="EMBL" id="BC048345">
    <property type="protein sequence ID" value="AAH48345.1"/>
    <property type="molecule type" value="mRNA"/>
</dbReference>
<dbReference type="EMBL" id="BC064981">
    <property type="protein sequence ID" value="AAH64981.1"/>
    <property type="molecule type" value="mRNA"/>
</dbReference>
<dbReference type="CCDS" id="CCDS42512.1">
    <molecule id="Q6P1N0-1"/>
</dbReference>
<dbReference type="CCDS" id="CCDS92537.1">
    <molecule id="Q6P1N0-2"/>
</dbReference>
<dbReference type="RefSeq" id="NP_001398067.1">
    <molecule id="Q6P1N0-2"/>
    <property type="nucleotide sequence ID" value="NM_001411138.1"/>
</dbReference>
<dbReference type="RefSeq" id="NP_060191.3">
    <molecule id="Q6P1N0-1"/>
    <property type="nucleotide sequence ID" value="NM_017721.4"/>
</dbReference>
<dbReference type="RefSeq" id="XP_005260030.1">
    <property type="nucleotide sequence ID" value="XM_005259973.2"/>
</dbReference>
<dbReference type="SMR" id="Q6P1N0"/>
<dbReference type="BioGRID" id="120212">
    <property type="interactions" value="170"/>
</dbReference>
<dbReference type="FunCoup" id="Q6P1N0">
    <property type="interactions" value="2859"/>
</dbReference>
<dbReference type="IntAct" id="Q6P1N0">
    <property type="interactions" value="63"/>
</dbReference>
<dbReference type="MINT" id="Q6P1N0"/>
<dbReference type="STRING" id="9606.ENSP00000313601"/>
<dbReference type="GlyGen" id="Q6P1N0">
    <property type="glycosylation" value="3 sites, 1 O-linked glycan (1 site)"/>
</dbReference>
<dbReference type="iPTMnet" id="Q6P1N0"/>
<dbReference type="PhosphoSitePlus" id="Q6P1N0"/>
<dbReference type="BioMuta" id="CC2D1A"/>
<dbReference type="DMDM" id="74737148"/>
<dbReference type="jPOST" id="Q6P1N0"/>
<dbReference type="MassIVE" id="Q6P1N0"/>
<dbReference type="PaxDb" id="9606-ENSP00000313601"/>
<dbReference type="PeptideAtlas" id="Q6P1N0"/>
<dbReference type="ProteomicsDB" id="66855">
    <molecule id="Q6P1N0-1"/>
</dbReference>
<dbReference type="ProteomicsDB" id="66856">
    <molecule id="Q6P1N0-2"/>
</dbReference>
<dbReference type="Pumba" id="Q6P1N0"/>
<dbReference type="Antibodypedia" id="1689">
    <property type="antibodies" value="186 antibodies from 28 providers"/>
</dbReference>
<dbReference type="DNASU" id="54862"/>
<dbReference type="Ensembl" id="ENST00000318003.11">
    <molecule id="Q6P1N0-1"/>
    <property type="protein sequence ID" value="ENSP00000313601.6"/>
    <property type="gene ID" value="ENSG00000132024.18"/>
</dbReference>
<dbReference type="Ensembl" id="ENST00000589606.5">
    <molecule id="Q6P1N0-2"/>
    <property type="protein sequence ID" value="ENSP00000467526.1"/>
    <property type="gene ID" value="ENSG00000132024.18"/>
</dbReference>
<dbReference type="Ensembl" id="ENST00000672017.1">
    <molecule id="Q6P1N0-1"/>
    <property type="protein sequence ID" value="ENSP00000500461.1"/>
    <property type="gene ID" value="ENSG00000288293.1"/>
</dbReference>
<dbReference type="Ensembl" id="ENST00000672339.1">
    <molecule id="Q6P1N0-2"/>
    <property type="protein sequence ID" value="ENSP00000500343.1"/>
    <property type="gene ID" value="ENSG00000288293.1"/>
</dbReference>
<dbReference type="GeneID" id="54862"/>
<dbReference type="KEGG" id="hsa:54862"/>
<dbReference type="MANE-Select" id="ENST00000318003.11">
    <property type="protein sequence ID" value="ENSP00000313601.6"/>
    <property type="RefSeq nucleotide sequence ID" value="NM_017721.5"/>
    <property type="RefSeq protein sequence ID" value="NP_060191.3"/>
</dbReference>
<dbReference type="UCSC" id="uc002mxo.3">
    <molecule id="Q6P1N0-1"/>
    <property type="organism name" value="human"/>
</dbReference>
<dbReference type="AGR" id="HGNC:30237"/>
<dbReference type="CTD" id="54862"/>
<dbReference type="DisGeNET" id="54862"/>
<dbReference type="GeneCards" id="CC2D1A"/>
<dbReference type="HGNC" id="HGNC:30237">
    <property type="gene designation" value="CC2D1A"/>
</dbReference>
<dbReference type="HPA" id="ENSG00000132024">
    <property type="expression patterns" value="Low tissue specificity"/>
</dbReference>
<dbReference type="MalaCards" id="CC2D1A"/>
<dbReference type="MIM" id="608443">
    <property type="type" value="phenotype"/>
</dbReference>
<dbReference type="MIM" id="610055">
    <property type="type" value="gene"/>
</dbReference>
<dbReference type="neXtProt" id="NX_Q6P1N0"/>
<dbReference type="OpenTargets" id="ENSG00000132024"/>
<dbReference type="Orphanet" id="88616">
    <property type="disease" value="Autosomal recessive non-syndromic intellectual disability"/>
</dbReference>
<dbReference type="PharmGKB" id="PA142672197"/>
<dbReference type="VEuPathDB" id="HostDB:ENSG00000132024"/>
<dbReference type="eggNOG" id="KOG3837">
    <property type="taxonomic scope" value="Eukaryota"/>
</dbReference>
<dbReference type="GeneTree" id="ENSGT00390000009595"/>
<dbReference type="HOGENOM" id="CLU_008808_0_0_1"/>
<dbReference type="InParanoid" id="Q6P1N0"/>
<dbReference type="OMA" id="HQTGRTK"/>
<dbReference type="OrthoDB" id="19996at2759"/>
<dbReference type="PAN-GO" id="Q6P1N0">
    <property type="GO annotations" value="4 GO annotations based on evolutionary models"/>
</dbReference>
<dbReference type="PhylomeDB" id="Q6P1N0"/>
<dbReference type="TreeFam" id="TF314229"/>
<dbReference type="PathwayCommons" id="Q6P1N0"/>
<dbReference type="SignaLink" id="Q6P1N0"/>
<dbReference type="SIGNOR" id="Q6P1N0"/>
<dbReference type="BioGRID-ORCS" id="54862">
    <property type="hits" value="11 hits in 1160 CRISPR screens"/>
</dbReference>
<dbReference type="CD-CODE" id="FB4E32DD">
    <property type="entry name" value="Presynaptic clusters and postsynaptic densities"/>
</dbReference>
<dbReference type="ChiTaRS" id="CC2D1A">
    <property type="organism name" value="human"/>
</dbReference>
<dbReference type="GeneWiki" id="CC2D1A"/>
<dbReference type="GenomeRNAi" id="54862"/>
<dbReference type="Pharos" id="Q6P1N0">
    <property type="development level" value="Tbio"/>
</dbReference>
<dbReference type="PRO" id="PR:Q6P1N0"/>
<dbReference type="Proteomes" id="UP000005640">
    <property type="component" value="Chromosome 19"/>
</dbReference>
<dbReference type="RNAct" id="Q6P1N0">
    <property type="molecule type" value="protein"/>
</dbReference>
<dbReference type="Bgee" id="ENSG00000132024">
    <property type="expression patterns" value="Expressed in right hemisphere of cerebellum and 91 other cell types or tissues"/>
</dbReference>
<dbReference type="ExpressionAtlas" id="Q6P1N0">
    <property type="expression patterns" value="baseline and differential"/>
</dbReference>
<dbReference type="GO" id="GO:0005813">
    <property type="term" value="C:centrosome"/>
    <property type="evidence" value="ECO:0007669"/>
    <property type="project" value="UniProtKB-SubCell"/>
</dbReference>
<dbReference type="GO" id="GO:0036064">
    <property type="term" value="C:ciliary basal body"/>
    <property type="evidence" value="ECO:0000314"/>
    <property type="project" value="HPA"/>
</dbReference>
<dbReference type="GO" id="GO:0005829">
    <property type="term" value="C:cytosol"/>
    <property type="evidence" value="ECO:0000314"/>
    <property type="project" value="HPA"/>
</dbReference>
<dbReference type="GO" id="GO:0010008">
    <property type="term" value="C:endosome membrane"/>
    <property type="evidence" value="ECO:0007669"/>
    <property type="project" value="Ensembl"/>
</dbReference>
<dbReference type="GO" id="GO:0070062">
    <property type="term" value="C:extracellular exosome"/>
    <property type="evidence" value="ECO:0007005"/>
    <property type="project" value="UniProtKB"/>
</dbReference>
<dbReference type="GO" id="GO:0001650">
    <property type="term" value="C:fibrillar center"/>
    <property type="evidence" value="ECO:0000314"/>
    <property type="project" value="HPA"/>
</dbReference>
<dbReference type="GO" id="GO:0098978">
    <property type="term" value="C:glutamatergic synapse"/>
    <property type="evidence" value="ECO:0007669"/>
    <property type="project" value="Ensembl"/>
</dbReference>
<dbReference type="GO" id="GO:0016020">
    <property type="term" value="C:membrane"/>
    <property type="evidence" value="ECO:0007005"/>
    <property type="project" value="UniProtKB"/>
</dbReference>
<dbReference type="GO" id="GO:0005634">
    <property type="term" value="C:nucleus"/>
    <property type="evidence" value="ECO:0000318"/>
    <property type="project" value="GO_Central"/>
</dbReference>
<dbReference type="GO" id="GO:0005886">
    <property type="term" value="C:plasma membrane"/>
    <property type="evidence" value="ECO:0000314"/>
    <property type="project" value="HPA"/>
</dbReference>
<dbReference type="GO" id="GO:0045296">
    <property type="term" value="F:cadherin binding"/>
    <property type="evidence" value="ECO:0007005"/>
    <property type="project" value="BHF-UCL"/>
</dbReference>
<dbReference type="GO" id="GO:0000981">
    <property type="term" value="F:DNA-binding transcription factor activity, RNA polymerase II-specific"/>
    <property type="evidence" value="ECO:0000318"/>
    <property type="project" value="GO_Central"/>
</dbReference>
<dbReference type="GO" id="GO:0001227">
    <property type="term" value="F:DNA-binding transcription repressor activity, RNA polymerase II-specific"/>
    <property type="evidence" value="ECO:0000314"/>
    <property type="project" value="GO_Central"/>
</dbReference>
<dbReference type="GO" id="GO:0000978">
    <property type="term" value="F:RNA polymerase II cis-regulatory region sequence-specific DNA binding"/>
    <property type="evidence" value="ECO:0000314"/>
    <property type="project" value="GO_Central"/>
</dbReference>
<dbReference type="GO" id="GO:0150023">
    <property type="term" value="P:apical dendrite arborization"/>
    <property type="evidence" value="ECO:0007669"/>
    <property type="project" value="Ensembl"/>
</dbReference>
<dbReference type="GO" id="GO:0007032">
    <property type="term" value="P:endosome organization"/>
    <property type="evidence" value="ECO:0007669"/>
    <property type="project" value="Ensembl"/>
</dbReference>
<dbReference type="GO" id="GO:1905381">
    <property type="term" value="P:negative regulation of snRNA transcription by RNA polymerase II"/>
    <property type="evidence" value="ECO:0000314"/>
    <property type="project" value="GO_Central"/>
</dbReference>
<dbReference type="GO" id="GO:0043123">
    <property type="term" value="P:positive regulation of canonical NF-kappaB signal transduction"/>
    <property type="evidence" value="ECO:0007001"/>
    <property type="project" value="UniProtKB"/>
</dbReference>
<dbReference type="GO" id="GO:0150052">
    <property type="term" value="P:regulation of postsynapse assembly"/>
    <property type="evidence" value="ECO:0007669"/>
    <property type="project" value="Ensembl"/>
</dbReference>
<dbReference type="GO" id="GO:0002087">
    <property type="term" value="P:regulation of respiratory gaseous exchange by nervous system process"/>
    <property type="evidence" value="ECO:0007669"/>
    <property type="project" value="Ensembl"/>
</dbReference>
<dbReference type="GO" id="GO:0006357">
    <property type="term" value="P:regulation of transcription by RNA polymerase II"/>
    <property type="evidence" value="ECO:0000318"/>
    <property type="project" value="GO_Central"/>
</dbReference>
<dbReference type="CDD" id="cd08690">
    <property type="entry name" value="C2_Freud-1"/>
    <property type="match status" value="1"/>
</dbReference>
<dbReference type="FunFam" id="2.60.40.150:FF:000110">
    <property type="entry name" value="Coiled-coil and C2 domain-containing protein 1A"/>
    <property type="match status" value="1"/>
</dbReference>
<dbReference type="Gene3D" id="2.60.40.150">
    <property type="entry name" value="C2 domain"/>
    <property type="match status" value="1"/>
</dbReference>
<dbReference type="InterPro" id="IPR000008">
    <property type="entry name" value="C2_dom"/>
</dbReference>
<dbReference type="InterPro" id="IPR035892">
    <property type="entry name" value="C2_domain_sf"/>
</dbReference>
<dbReference type="InterPro" id="IPR037772">
    <property type="entry name" value="C2_Freud"/>
</dbReference>
<dbReference type="InterPro" id="IPR039725">
    <property type="entry name" value="CC2D1A/B"/>
</dbReference>
<dbReference type="InterPro" id="IPR006608">
    <property type="entry name" value="CC2D1A/B_DM14"/>
</dbReference>
<dbReference type="PANTHER" id="PTHR13076">
    <property type="entry name" value="COILED-COIL AND C2 DOMAIN-CONTAINING PROTEIN 1-LIKE"/>
    <property type="match status" value="1"/>
</dbReference>
<dbReference type="PANTHER" id="PTHR13076:SF8">
    <property type="entry name" value="COILED-COIL AND C2 DOMAIN-CONTAINING PROTEIN 1A"/>
    <property type="match status" value="1"/>
</dbReference>
<dbReference type="Pfam" id="PF00168">
    <property type="entry name" value="C2"/>
    <property type="match status" value="1"/>
</dbReference>
<dbReference type="Pfam" id="PF21528">
    <property type="entry name" value="CC2D1A-B_DM14"/>
    <property type="match status" value="3"/>
</dbReference>
<dbReference type="SMART" id="SM00239">
    <property type="entry name" value="C2"/>
    <property type="match status" value="1"/>
</dbReference>
<dbReference type="SMART" id="SM00685">
    <property type="entry name" value="DM14"/>
    <property type="match status" value="4"/>
</dbReference>
<dbReference type="SUPFAM" id="SSF49562">
    <property type="entry name" value="C2 domain (Calcium/lipid-binding domain, CaLB)"/>
    <property type="match status" value="1"/>
</dbReference>
<dbReference type="PROSITE" id="PS50004">
    <property type="entry name" value="C2"/>
    <property type="match status" value="1"/>
</dbReference>